<evidence type="ECO:0000250" key="1">
    <source>
        <dbReference type="UniProtKB" id="Q9EQX0"/>
    </source>
</evidence>
<evidence type="ECO:0000255" key="2"/>
<evidence type="ECO:0000256" key="3">
    <source>
        <dbReference type="SAM" id="MobiDB-lite"/>
    </source>
</evidence>
<evidence type="ECO:0000269" key="4">
    <source>
    </source>
</evidence>
<evidence type="ECO:0000305" key="5"/>
<evidence type="ECO:0000312" key="6">
    <source>
        <dbReference type="EMBL" id="BAB96565.1"/>
    </source>
</evidence>
<reference evidence="5 6" key="1">
    <citation type="journal article" date="2003" name="J. Endocrinol.">
        <title>Amidated fish ghrelin: purification, cDNA cloning in the Japanese eel and its biological activity.</title>
        <authorList>
            <person name="Kaiya H."/>
            <person name="Kojima M."/>
            <person name="Hosoda H."/>
            <person name="Riley L.G."/>
            <person name="Hirano T."/>
            <person name="Grau E.G."/>
            <person name="Kangawa K."/>
        </authorList>
    </citation>
    <scope>NUCLEOTIDE SEQUENCE [MRNA]</scope>
    <scope>PROTEIN SEQUENCE OF 27-47</scope>
    <scope>FUNCTION</scope>
    <scope>TISSUE SPECIFICITY</scope>
    <scope>ACYLATION AT SER-29</scope>
    <scope>AMIDATION AT VAL-47</scope>
    <scope>MASS SPECTROMETRY</scope>
    <source>
        <tissue evidence="6">Stomach</tissue>
    </source>
</reference>
<organism>
    <name type="scientific">Anguilla japonica</name>
    <name type="common">Japanese eel</name>
    <dbReference type="NCBI Taxonomy" id="7937"/>
    <lineage>
        <taxon>Eukaryota</taxon>
        <taxon>Metazoa</taxon>
        <taxon>Chordata</taxon>
        <taxon>Craniata</taxon>
        <taxon>Vertebrata</taxon>
        <taxon>Euteleostomi</taxon>
        <taxon>Actinopterygii</taxon>
        <taxon>Neopterygii</taxon>
        <taxon>Teleostei</taxon>
        <taxon>Anguilliformes</taxon>
        <taxon>Anguillidae</taxon>
        <taxon>Anguilla</taxon>
    </lineage>
</organism>
<accession>Q8JFY4</accession>
<keyword id="KW-0027">Amidation</keyword>
<keyword id="KW-0165">Cleavage on pair of basic residues</keyword>
<keyword id="KW-0903">Direct protein sequencing</keyword>
<keyword id="KW-0372">Hormone</keyword>
<keyword id="KW-0449">Lipoprotein</keyword>
<keyword id="KW-0964">Secreted</keyword>
<keyword id="KW-0732">Signal</keyword>
<name>GHRL_ANGJA</name>
<protein>
    <recommendedName>
        <fullName>Ghrelin</fullName>
    </recommendedName>
    <alternativeName>
        <fullName>Ghrelin-21</fullName>
    </alternativeName>
</protein>
<dbReference type="EMBL" id="AB062427">
    <property type="protein sequence ID" value="BAB96565.1"/>
    <property type="molecule type" value="mRNA"/>
</dbReference>
<dbReference type="SMR" id="Q8JFY4"/>
<dbReference type="GO" id="GO:0005615">
    <property type="term" value="C:extracellular space"/>
    <property type="evidence" value="ECO:0000305"/>
    <property type="project" value="UniProtKB"/>
</dbReference>
<dbReference type="GO" id="GO:0001664">
    <property type="term" value="F:G protein-coupled receptor binding"/>
    <property type="evidence" value="ECO:0000353"/>
    <property type="project" value="UniProtKB"/>
</dbReference>
<dbReference type="GO" id="GO:0031768">
    <property type="term" value="F:ghrelin receptor binding"/>
    <property type="evidence" value="ECO:0007669"/>
    <property type="project" value="TreeGrafter"/>
</dbReference>
<dbReference type="GO" id="GO:0016608">
    <property type="term" value="F:growth hormone-releasing hormone activity"/>
    <property type="evidence" value="ECO:0000314"/>
    <property type="project" value="UniProtKB"/>
</dbReference>
<dbReference type="GO" id="GO:0007186">
    <property type="term" value="P:G protein-coupled receptor signaling pathway"/>
    <property type="evidence" value="ECO:0000314"/>
    <property type="project" value="UniProtKB"/>
</dbReference>
<dbReference type="GO" id="GO:0001696">
    <property type="term" value="P:gastric acid secretion"/>
    <property type="evidence" value="ECO:0007669"/>
    <property type="project" value="TreeGrafter"/>
</dbReference>
<dbReference type="GO" id="GO:0050728">
    <property type="term" value="P:negative regulation of inflammatory response"/>
    <property type="evidence" value="ECO:0007669"/>
    <property type="project" value="TreeGrafter"/>
</dbReference>
<dbReference type="GO" id="GO:0060124">
    <property type="term" value="P:positive regulation of growth hormone secretion"/>
    <property type="evidence" value="ECO:0007669"/>
    <property type="project" value="TreeGrafter"/>
</dbReference>
<dbReference type="GO" id="GO:0032095">
    <property type="term" value="P:regulation of response to food"/>
    <property type="evidence" value="ECO:0007669"/>
    <property type="project" value="TreeGrafter"/>
</dbReference>
<dbReference type="InterPro" id="IPR006737">
    <property type="entry name" value="Motilin_assoc"/>
</dbReference>
<dbReference type="InterPro" id="IPR005441">
    <property type="entry name" value="Preproghrelin"/>
</dbReference>
<dbReference type="PANTHER" id="PTHR14122:SF1">
    <property type="entry name" value="APPETITE-REGULATING HORMONE"/>
    <property type="match status" value="1"/>
</dbReference>
<dbReference type="PANTHER" id="PTHR14122">
    <property type="entry name" value="GHRELIN PRECURSOR"/>
    <property type="match status" value="1"/>
</dbReference>
<dbReference type="Pfam" id="PF04643">
    <property type="entry name" value="Motilin_assoc"/>
    <property type="match status" value="1"/>
</dbReference>
<comment type="function">
    <text evidence="4">Ligand for growth hormone secretagogue receptor type 1 (GHSR). Induces the release of growth hormone from the pituitary. Has an appetite-stimulating effect, induces adiposity and stimulates gastric acid secretion. Involved in growth regulation.</text>
</comment>
<comment type="subcellular location">
    <subcellularLocation>
        <location evidence="5">Secreted</location>
    </subcellularLocation>
</comment>
<comment type="tissue specificity">
    <text evidence="4">Highest levels in stomach and anterior intestine. Lower levels in posterior intestine, kidney and brain. Low levels in heart, head kidney and middle intestine.</text>
</comment>
<comment type="PTM">
    <text evidence="1 4">O-octanoylated by GOAT/MBOAT4 (By similarity). O-octanoylation or O-decanoylation is essential for activity. The O-decanoylated form ghrelin-21-C10 differs in the length of the carbon backbone of the carboxylic acid forming an ester bond with Ser-29. 44% of eel ghrelin is O-decanoylated (PubMed:12630926).</text>
</comment>
<comment type="mass spectrometry">
    <text>Ghrelin-21-C10, O-decanoylated form.</text>
</comment>
<comment type="mass spectrometry">
    <text>Ghrelin-21-C8, O-octanoylated form.</text>
</comment>
<comment type="similarity">
    <text evidence="2">Belongs to the motilin family.</text>
</comment>
<sequence>MRQMKRTAYIILLVCVLALWMDSVQAGSSFLSPSQRPQGKDKKPPRVGRRDSDGILDLFMRPPLQDEDIRHITFNTPFEIGITMTEELFQQYGEVMQKIMQDLLMDTPAKE</sequence>
<gene>
    <name type="primary">ghrl</name>
</gene>
<proteinExistence type="evidence at protein level"/>
<feature type="signal peptide" evidence="4">
    <location>
        <begin position="1"/>
        <end position="26"/>
    </location>
</feature>
<feature type="peptide" id="PRO_0000019211" description="Ghrelin" evidence="4">
    <location>
        <begin position="27"/>
        <end position="47"/>
    </location>
</feature>
<feature type="propeptide" id="PRO_0000019212" description="Removed in mature form">
    <location>
        <begin position="51"/>
        <end position="111"/>
    </location>
</feature>
<feature type="region of interest" description="Disordered" evidence="3">
    <location>
        <begin position="28"/>
        <end position="53"/>
    </location>
</feature>
<feature type="compositionally biased region" description="Polar residues" evidence="3">
    <location>
        <begin position="28"/>
        <end position="37"/>
    </location>
</feature>
<feature type="compositionally biased region" description="Basic and acidic residues" evidence="3">
    <location>
        <begin position="38"/>
        <end position="53"/>
    </location>
</feature>
<feature type="modified residue" description="Valine amide" evidence="4">
    <location>
        <position position="47"/>
    </location>
</feature>
<feature type="lipid moiety-binding region" description="O-decanoyl serine; alternate" evidence="4">
    <location>
        <position position="29"/>
    </location>
</feature>
<feature type="lipid moiety-binding region" description="O-hexanoyl serine; alternate" evidence="1">
    <location>
        <position position="29"/>
    </location>
</feature>
<feature type="lipid moiety-binding region" description="O-octanoyl serine; alternate" evidence="4">
    <location>
        <position position="29"/>
    </location>
</feature>